<dbReference type="EC" id="3.1.-.-" evidence="1"/>
<dbReference type="EMBL" id="AE000666">
    <property type="protein sequence ID" value="AAB85573.1"/>
    <property type="molecule type" value="Genomic_DNA"/>
</dbReference>
<dbReference type="PIR" id="A69011">
    <property type="entry name" value="A69011"/>
</dbReference>
<dbReference type="SMR" id="O27156"/>
<dbReference type="STRING" id="187420.MTH_1084"/>
<dbReference type="PaxDb" id="187420-MTH_1084"/>
<dbReference type="EnsemblBacteria" id="AAB85573">
    <property type="protein sequence ID" value="AAB85573"/>
    <property type="gene ID" value="MTH_1084"/>
</dbReference>
<dbReference type="KEGG" id="mth:MTH_1084"/>
<dbReference type="PATRIC" id="fig|187420.15.peg.1062"/>
<dbReference type="HOGENOM" id="CLU_052779_2_0_2"/>
<dbReference type="InParanoid" id="O27156"/>
<dbReference type="Proteomes" id="UP000005223">
    <property type="component" value="Chromosome"/>
</dbReference>
<dbReference type="GO" id="GO:0003677">
    <property type="term" value="F:DNA binding"/>
    <property type="evidence" value="ECO:0007669"/>
    <property type="project" value="UniProtKB-KW"/>
</dbReference>
<dbReference type="GO" id="GO:0004520">
    <property type="term" value="F:DNA endonuclease activity"/>
    <property type="evidence" value="ECO:0007669"/>
    <property type="project" value="InterPro"/>
</dbReference>
<dbReference type="GO" id="GO:0046872">
    <property type="term" value="F:metal ion binding"/>
    <property type="evidence" value="ECO:0007669"/>
    <property type="project" value="UniProtKB-UniRule"/>
</dbReference>
<dbReference type="GO" id="GO:0051607">
    <property type="term" value="P:defense response to virus"/>
    <property type="evidence" value="ECO:0007669"/>
    <property type="project" value="UniProtKB-UniRule"/>
</dbReference>
<dbReference type="GO" id="GO:0043571">
    <property type="term" value="P:maintenance of CRISPR repeat elements"/>
    <property type="evidence" value="ECO:0007669"/>
    <property type="project" value="UniProtKB-UniRule"/>
</dbReference>
<dbReference type="CDD" id="cd09722">
    <property type="entry name" value="Cas1_I-B"/>
    <property type="match status" value="1"/>
</dbReference>
<dbReference type="Gene3D" id="1.20.120.920">
    <property type="entry name" value="CRISPR-associated endonuclease Cas1, C-terminal domain"/>
    <property type="match status" value="1"/>
</dbReference>
<dbReference type="Gene3D" id="3.100.10.20">
    <property type="entry name" value="CRISPR-associated endonuclease Cas1, N-terminal domain"/>
    <property type="match status" value="1"/>
</dbReference>
<dbReference type="HAMAP" id="MF_01470">
    <property type="entry name" value="Cas1"/>
    <property type="match status" value="1"/>
</dbReference>
<dbReference type="InterPro" id="IPR002729">
    <property type="entry name" value="CRISPR-assoc_Cas1"/>
</dbReference>
<dbReference type="InterPro" id="IPR042206">
    <property type="entry name" value="CRISPR-assoc_Cas1_C"/>
</dbReference>
<dbReference type="InterPro" id="IPR019858">
    <property type="entry name" value="CRISPR-assoc_Cas1_HMARI/TNEAP"/>
</dbReference>
<dbReference type="InterPro" id="IPR042211">
    <property type="entry name" value="CRISPR-assoc_Cas1_N"/>
</dbReference>
<dbReference type="NCBIfam" id="TIGR00287">
    <property type="entry name" value="cas1"/>
    <property type="match status" value="1"/>
</dbReference>
<dbReference type="NCBIfam" id="TIGR03641">
    <property type="entry name" value="cas1_HMARI"/>
    <property type="match status" value="1"/>
</dbReference>
<dbReference type="PANTHER" id="PTHR43219">
    <property type="entry name" value="CRISPR-ASSOCIATED ENDONUCLEASE CAS1"/>
    <property type="match status" value="1"/>
</dbReference>
<dbReference type="PANTHER" id="PTHR43219:SF2">
    <property type="entry name" value="CRISPR-ASSOCIATED ENDONUCLEASE CAS1"/>
    <property type="match status" value="1"/>
</dbReference>
<dbReference type="Pfam" id="PF01867">
    <property type="entry name" value="Cas_Cas1"/>
    <property type="match status" value="1"/>
</dbReference>
<feature type="chain" id="PRO_0000417105" description="CRISPR-associated endonuclease Cas1">
    <location>
        <begin position="1"/>
        <end position="334"/>
    </location>
</feature>
<feature type="binding site" evidence="1">
    <location>
        <position position="161"/>
    </location>
    <ligand>
        <name>Mn(2+)</name>
        <dbReference type="ChEBI" id="CHEBI:29035"/>
    </ligand>
</feature>
<feature type="binding site" evidence="1">
    <location>
        <position position="226"/>
    </location>
    <ligand>
        <name>Mn(2+)</name>
        <dbReference type="ChEBI" id="CHEBI:29035"/>
    </ligand>
</feature>
<feature type="binding site" evidence="1">
    <location>
        <position position="241"/>
    </location>
    <ligand>
        <name>Mn(2+)</name>
        <dbReference type="ChEBI" id="CHEBI:29035"/>
    </ligand>
</feature>
<proteinExistence type="inferred from homology"/>
<gene>
    <name evidence="1" type="primary">cas1</name>
    <name type="ordered locus">MTH_1084</name>
</gene>
<evidence type="ECO:0000255" key="1">
    <source>
        <dbReference type="HAMAP-Rule" id="MF_01470"/>
    </source>
</evidence>
<organism>
    <name type="scientific">Methanothermobacter thermautotrophicus (strain ATCC 29096 / DSM 1053 / JCM 10044 / NBRC 100330 / Delta H)</name>
    <name type="common">Methanobacterium thermoautotrophicum</name>
    <dbReference type="NCBI Taxonomy" id="187420"/>
    <lineage>
        <taxon>Archaea</taxon>
        <taxon>Methanobacteriati</taxon>
        <taxon>Methanobacteriota</taxon>
        <taxon>Methanomada group</taxon>
        <taxon>Methanobacteria</taxon>
        <taxon>Methanobacteriales</taxon>
        <taxon>Methanobacteriaceae</taxon>
        <taxon>Methanothermobacter</taxon>
    </lineage>
</organism>
<reference key="1">
    <citation type="journal article" date="1997" name="J. Bacteriol.">
        <title>Complete genome sequence of Methanobacterium thermoautotrophicum deltaH: functional analysis and comparative genomics.</title>
        <authorList>
            <person name="Smith D.R."/>
            <person name="Doucette-Stamm L.A."/>
            <person name="Deloughery C."/>
            <person name="Lee H.-M."/>
            <person name="Dubois J."/>
            <person name="Aldredge T."/>
            <person name="Bashirzadeh R."/>
            <person name="Blakely D."/>
            <person name="Cook R."/>
            <person name="Gilbert K."/>
            <person name="Harrison D."/>
            <person name="Hoang L."/>
            <person name="Keagle P."/>
            <person name="Lumm W."/>
            <person name="Pothier B."/>
            <person name="Qiu D."/>
            <person name="Spadafora R."/>
            <person name="Vicare R."/>
            <person name="Wang Y."/>
            <person name="Wierzbowski J."/>
            <person name="Gibson R."/>
            <person name="Jiwani N."/>
            <person name="Caruso A."/>
            <person name="Bush D."/>
            <person name="Safer H."/>
            <person name="Patwell D."/>
            <person name="Prabhakar S."/>
            <person name="McDougall S."/>
            <person name="Shimer G."/>
            <person name="Goyal A."/>
            <person name="Pietrovski S."/>
            <person name="Church G.M."/>
            <person name="Daniels C.J."/>
            <person name="Mao J.-I."/>
            <person name="Rice P."/>
            <person name="Noelling J."/>
            <person name="Reeve J.N."/>
        </authorList>
    </citation>
    <scope>NUCLEOTIDE SEQUENCE [LARGE SCALE GENOMIC DNA]</scope>
    <source>
        <strain>ATCC 29096 / DSM 1053 / JCM 10044 / NBRC 100330 / Delta H</strain>
    </source>
</reference>
<protein>
    <recommendedName>
        <fullName evidence="1">CRISPR-associated endonuclease Cas1</fullName>
        <ecNumber evidence="1">3.1.-.-</ecNumber>
    </recommendedName>
</protein>
<accession>O27156</accession>
<name>CAS1_METTH</name>
<sequence>MNSAGLEQCGMIMTRKNYYITTDGLLKRNENTLYFINKDLKRPIPINKIYSIYSYGALTISSQALNLLSKEGIPIHFFNRYGFYSGSFYPRETLLSGDVIIKQAEHVIDHDKRIELARSFVRGAALNMRRVLSYYGIENGISDTLMDLDSSNSVTDVMNVEGRIRSDYYNAIDSILPEGFRIGKRTRRPPENMTNAMISFGNSLLYSTVITELYNTQLNPTISYLHEPFERRYSLALDLSEIFKPTLIDRMIISLIKKKAIKAEDFEHGMNHCLLNNSGKRKFLAEYDRRLGKTVKHRELGRKVSYRRLIRLEAYKLIKHLIGQKSYEPFVMWW</sequence>
<keyword id="KW-0051">Antiviral defense</keyword>
<keyword id="KW-0238">DNA-binding</keyword>
<keyword id="KW-0255">Endonuclease</keyword>
<keyword id="KW-0378">Hydrolase</keyword>
<keyword id="KW-0460">Magnesium</keyword>
<keyword id="KW-0464">Manganese</keyword>
<keyword id="KW-0479">Metal-binding</keyword>
<keyword id="KW-0540">Nuclease</keyword>
<keyword id="KW-1185">Reference proteome</keyword>
<comment type="function">
    <text evidence="1">CRISPR (clustered regularly interspaced short palindromic repeat), is an adaptive immune system that provides protection against mobile genetic elements (viruses, transposable elements and conjugative plasmids). CRISPR clusters contain spacers, sequences complementary to antecedent mobile elements, and target invading nucleic acids. CRISPR clusters are transcribed and processed into CRISPR RNA (crRNA). Acts as a dsDNA endonuclease. Involved in the integration of spacer DNA into the CRISPR cassette.</text>
</comment>
<comment type="cofactor">
    <cofactor evidence="1">
        <name>Mg(2+)</name>
        <dbReference type="ChEBI" id="CHEBI:18420"/>
    </cofactor>
    <cofactor evidence="1">
        <name>Mn(2+)</name>
        <dbReference type="ChEBI" id="CHEBI:29035"/>
    </cofactor>
</comment>
<comment type="subunit">
    <text evidence="1">Homodimer, forms a heterotetramer with a Cas2 homodimer.</text>
</comment>
<comment type="similarity">
    <text evidence="1">Belongs to the CRISPR-associated endonuclease Cas1 family.</text>
</comment>